<protein>
    <recommendedName>
        <fullName evidence="2">Small ribosomal subunit protein uS12</fullName>
    </recommendedName>
    <alternativeName>
        <fullName evidence="4">30S ribosomal protein S12</fullName>
    </alternativeName>
</protein>
<evidence type="ECO:0000250" key="1"/>
<evidence type="ECO:0000255" key="2">
    <source>
        <dbReference type="HAMAP-Rule" id="MF_00403"/>
    </source>
</evidence>
<evidence type="ECO:0000256" key="3">
    <source>
        <dbReference type="SAM" id="MobiDB-lite"/>
    </source>
</evidence>
<evidence type="ECO:0000305" key="4"/>
<name>RS12_ALKEH</name>
<proteinExistence type="inferred from homology"/>
<dbReference type="EMBL" id="CP000453">
    <property type="protein sequence ID" value="ABI55807.1"/>
    <property type="molecule type" value="Genomic_DNA"/>
</dbReference>
<dbReference type="RefSeq" id="WP_011628203.1">
    <property type="nucleotide sequence ID" value="NC_008340.1"/>
</dbReference>
<dbReference type="SMR" id="Q0ABI0"/>
<dbReference type="KEGG" id="aeh:Mlg_0453"/>
<dbReference type="eggNOG" id="COG0048">
    <property type="taxonomic scope" value="Bacteria"/>
</dbReference>
<dbReference type="HOGENOM" id="CLU_104295_1_2_6"/>
<dbReference type="OrthoDB" id="9802366at2"/>
<dbReference type="Proteomes" id="UP000001962">
    <property type="component" value="Chromosome"/>
</dbReference>
<dbReference type="GO" id="GO:0015935">
    <property type="term" value="C:small ribosomal subunit"/>
    <property type="evidence" value="ECO:0007669"/>
    <property type="project" value="InterPro"/>
</dbReference>
<dbReference type="GO" id="GO:0019843">
    <property type="term" value="F:rRNA binding"/>
    <property type="evidence" value="ECO:0007669"/>
    <property type="project" value="UniProtKB-UniRule"/>
</dbReference>
<dbReference type="GO" id="GO:0003735">
    <property type="term" value="F:structural constituent of ribosome"/>
    <property type="evidence" value="ECO:0007669"/>
    <property type="project" value="InterPro"/>
</dbReference>
<dbReference type="GO" id="GO:0000049">
    <property type="term" value="F:tRNA binding"/>
    <property type="evidence" value="ECO:0007669"/>
    <property type="project" value="UniProtKB-UniRule"/>
</dbReference>
<dbReference type="GO" id="GO:0006412">
    <property type="term" value="P:translation"/>
    <property type="evidence" value="ECO:0007669"/>
    <property type="project" value="UniProtKB-UniRule"/>
</dbReference>
<dbReference type="CDD" id="cd03368">
    <property type="entry name" value="Ribosomal_S12"/>
    <property type="match status" value="1"/>
</dbReference>
<dbReference type="FunFam" id="2.40.50.140:FF:000001">
    <property type="entry name" value="30S ribosomal protein S12"/>
    <property type="match status" value="1"/>
</dbReference>
<dbReference type="Gene3D" id="2.40.50.140">
    <property type="entry name" value="Nucleic acid-binding proteins"/>
    <property type="match status" value="1"/>
</dbReference>
<dbReference type="HAMAP" id="MF_00403_B">
    <property type="entry name" value="Ribosomal_uS12_B"/>
    <property type="match status" value="1"/>
</dbReference>
<dbReference type="InterPro" id="IPR012340">
    <property type="entry name" value="NA-bd_OB-fold"/>
</dbReference>
<dbReference type="InterPro" id="IPR006032">
    <property type="entry name" value="Ribosomal_uS12"/>
</dbReference>
<dbReference type="InterPro" id="IPR005679">
    <property type="entry name" value="Ribosomal_uS12_bac"/>
</dbReference>
<dbReference type="NCBIfam" id="TIGR00981">
    <property type="entry name" value="rpsL_bact"/>
    <property type="match status" value="1"/>
</dbReference>
<dbReference type="PANTHER" id="PTHR11652">
    <property type="entry name" value="30S RIBOSOMAL PROTEIN S12 FAMILY MEMBER"/>
    <property type="match status" value="1"/>
</dbReference>
<dbReference type="Pfam" id="PF00164">
    <property type="entry name" value="Ribosom_S12_S23"/>
    <property type="match status" value="1"/>
</dbReference>
<dbReference type="PIRSF" id="PIRSF002133">
    <property type="entry name" value="Ribosomal_S12/S23"/>
    <property type="match status" value="1"/>
</dbReference>
<dbReference type="PRINTS" id="PR01034">
    <property type="entry name" value="RIBOSOMALS12"/>
</dbReference>
<dbReference type="SUPFAM" id="SSF50249">
    <property type="entry name" value="Nucleic acid-binding proteins"/>
    <property type="match status" value="1"/>
</dbReference>
<dbReference type="PROSITE" id="PS00055">
    <property type="entry name" value="RIBOSOMAL_S12"/>
    <property type="match status" value="1"/>
</dbReference>
<reference key="1">
    <citation type="submission" date="2006-08" db="EMBL/GenBank/DDBJ databases">
        <title>Complete sequence of Alkalilimnicola ehrilichei MLHE-1.</title>
        <authorList>
            <person name="Copeland A."/>
            <person name="Lucas S."/>
            <person name="Lapidus A."/>
            <person name="Barry K."/>
            <person name="Detter J.C."/>
            <person name="Glavina del Rio T."/>
            <person name="Hammon N."/>
            <person name="Israni S."/>
            <person name="Dalin E."/>
            <person name="Tice H."/>
            <person name="Pitluck S."/>
            <person name="Sims D."/>
            <person name="Brettin T."/>
            <person name="Bruce D."/>
            <person name="Han C."/>
            <person name="Tapia R."/>
            <person name="Gilna P."/>
            <person name="Schmutz J."/>
            <person name="Larimer F."/>
            <person name="Land M."/>
            <person name="Hauser L."/>
            <person name="Kyrpides N."/>
            <person name="Mikhailova N."/>
            <person name="Oremland R.S."/>
            <person name="Hoeft S.E."/>
            <person name="Switzer-Blum J."/>
            <person name="Kulp T."/>
            <person name="King G."/>
            <person name="Tabita R."/>
            <person name="Witte B."/>
            <person name="Santini J.M."/>
            <person name="Basu P."/>
            <person name="Hollibaugh J.T."/>
            <person name="Xie G."/>
            <person name="Stolz J.F."/>
            <person name="Richardson P."/>
        </authorList>
    </citation>
    <scope>NUCLEOTIDE SEQUENCE [LARGE SCALE GENOMIC DNA]</scope>
    <source>
        <strain>ATCC BAA-1101 / DSM 17681 / MLHE-1</strain>
    </source>
</reference>
<comment type="function">
    <text evidence="2">With S4 and S5 plays an important role in translational accuracy.</text>
</comment>
<comment type="function">
    <text evidence="2">Interacts with and stabilizes bases of the 16S rRNA that are involved in tRNA selection in the A site and with the mRNA backbone. Located at the interface of the 30S and 50S subunits, it traverses the body of the 30S subunit contacting proteins on the other side and probably holding the rRNA structure together. The combined cluster of proteins S8, S12 and S17 appears to hold together the shoulder and platform of the 30S subunit.</text>
</comment>
<comment type="subunit">
    <text evidence="2">Part of the 30S ribosomal subunit. Contacts proteins S8 and S17. May interact with IF1 in the 30S initiation complex.</text>
</comment>
<comment type="similarity">
    <text evidence="2">Belongs to the universal ribosomal protein uS12 family.</text>
</comment>
<accession>Q0ABI0</accession>
<gene>
    <name evidence="2" type="primary">rpsL</name>
    <name type="ordered locus">Mlg_0453</name>
</gene>
<keyword id="KW-0488">Methylation</keyword>
<keyword id="KW-1185">Reference proteome</keyword>
<keyword id="KW-0687">Ribonucleoprotein</keyword>
<keyword id="KW-0689">Ribosomal protein</keyword>
<keyword id="KW-0694">RNA-binding</keyword>
<keyword id="KW-0699">rRNA-binding</keyword>
<keyword id="KW-0820">tRNA-binding</keyword>
<sequence>MATINQLVRKGRKRRVAKSNVPALEASPQKRGVCTRVYTTTPKKPNSALRKVARVRLTNNYEVSSYIGGEGHNLQEHSVVLIRGGRVKDLPGVRYHVVRGAADTAGVDKRRQGRSKYGAKRPKS</sequence>
<feature type="chain" id="PRO_0000263542" description="Small ribosomal subunit protein uS12">
    <location>
        <begin position="1"/>
        <end position="124"/>
    </location>
</feature>
<feature type="region of interest" description="Disordered" evidence="3">
    <location>
        <begin position="1"/>
        <end position="29"/>
    </location>
</feature>
<feature type="region of interest" description="Disordered" evidence="3">
    <location>
        <begin position="101"/>
        <end position="124"/>
    </location>
</feature>
<feature type="compositionally biased region" description="Basic residues" evidence="3">
    <location>
        <begin position="111"/>
        <end position="124"/>
    </location>
</feature>
<feature type="modified residue" description="3-methylthioaspartic acid" evidence="1">
    <location>
        <position position="89"/>
    </location>
</feature>
<organism>
    <name type="scientific">Alkalilimnicola ehrlichii (strain ATCC BAA-1101 / DSM 17681 / MLHE-1)</name>
    <dbReference type="NCBI Taxonomy" id="187272"/>
    <lineage>
        <taxon>Bacteria</taxon>
        <taxon>Pseudomonadati</taxon>
        <taxon>Pseudomonadota</taxon>
        <taxon>Gammaproteobacteria</taxon>
        <taxon>Chromatiales</taxon>
        <taxon>Ectothiorhodospiraceae</taxon>
        <taxon>Alkalilimnicola</taxon>
    </lineage>
</organism>